<dbReference type="EMBL" id="EU431223">
    <property type="protein sequence ID" value="ABY86824.1"/>
    <property type="molecule type" value="Genomic_DNA"/>
</dbReference>
<dbReference type="EMBL" id="EU431223">
    <property type="protein sequence ID" value="ABY86845.1"/>
    <property type="molecule type" value="Genomic_DNA"/>
</dbReference>
<dbReference type="SMR" id="B1A976"/>
<dbReference type="KEGG" id="cpap:5878356"/>
<dbReference type="KEGG" id="cpap:5878399"/>
<dbReference type="OrthoDB" id="1046711at2759"/>
<dbReference type="GO" id="GO:0009507">
    <property type="term" value="C:chloroplast"/>
    <property type="evidence" value="ECO:0007669"/>
    <property type="project" value="UniProtKB-SubCell"/>
</dbReference>
<dbReference type="GO" id="GO:0005762">
    <property type="term" value="C:mitochondrial large ribosomal subunit"/>
    <property type="evidence" value="ECO:0007669"/>
    <property type="project" value="TreeGrafter"/>
</dbReference>
<dbReference type="GO" id="GO:0019843">
    <property type="term" value="F:rRNA binding"/>
    <property type="evidence" value="ECO:0007669"/>
    <property type="project" value="UniProtKB-UniRule"/>
</dbReference>
<dbReference type="GO" id="GO:0003735">
    <property type="term" value="F:structural constituent of ribosome"/>
    <property type="evidence" value="ECO:0007669"/>
    <property type="project" value="InterPro"/>
</dbReference>
<dbReference type="GO" id="GO:0016740">
    <property type="term" value="F:transferase activity"/>
    <property type="evidence" value="ECO:0007669"/>
    <property type="project" value="InterPro"/>
</dbReference>
<dbReference type="GO" id="GO:0032543">
    <property type="term" value="P:mitochondrial translation"/>
    <property type="evidence" value="ECO:0007669"/>
    <property type="project" value="TreeGrafter"/>
</dbReference>
<dbReference type="FunFam" id="4.10.950.10:FF:000001">
    <property type="entry name" value="50S ribosomal protein L2"/>
    <property type="match status" value="1"/>
</dbReference>
<dbReference type="FunFam" id="2.30.30.30:FF:000008">
    <property type="entry name" value="50S ribosomal protein L2, chloroplastic"/>
    <property type="match status" value="1"/>
</dbReference>
<dbReference type="FunFam" id="2.40.50.140:FF:000029">
    <property type="entry name" value="50S ribosomal protein L2, chloroplastic"/>
    <property type="match status" value="1"/>
</dbReference>
<dbReference type="Gene3D" id="2.30.30.30">
    <property type="match status" value="1"/>
</dbReference>
<dbReference type="Gene3D" id="2.40.50.140">
    <property type="entry name" value="Nucleic acid-binding proteins"/>
    <property type="match status" value="1"/>
</dbReference>
<dbReference type="Gene3D" id="4.10.950.10">
    <property type="entry name" value="Ribosomal protein L2, domain 3"/>
    <property type="match status" value="1"/>
</dbReference>
<dbReference type="HAMAP" id="MF_01320_B">
    <property type="entry name" value="Ribosomal_uL2_B"/>
    <property type="match status" value="1"/>
</dbReference>
<dbReference type="InterPro" id="IPR012340">
    <property type="entry name" value="NA-bd_OB-fold"/>
</dbReference>
<dbReference type="InterPro" id="IPR014722">
    <property type="entry name" value="Rib_uL2_dom2"/>
</dbReference>
<dbReference type="InterPro" id="IPR002171">
    <property type="entry name" value="Ribosomal_uL2"/>
</dbReference>
<dbReference type="InterPro" id="IPR005880">
    <property type="entry name" value="Ribosomal_uL2_bac/org-type"/>
</dbReference>
<dbReference type="InterPro" id="IPR022669">
    <property type="entry name" value="Ribosomal_uL2_C"/>
</dbReference>
<dbReference type="InterPro" id="IPR022671">
    <property type="entry name" value="Ribosomal_uL2_CS"/>
</dbReference>
<dbReference type="InterPro" id="IPR014726">
    <property type="entry name" value="Ribosomal_uL2_dom3"/>
</dbReference>
<dbReference type="InterPro" id="IPR022666">
    <property type="entry name" value="Ribosomal_uL2_RNA-bd_dom"/>
</dbReference>
<dbReference type="InterPro" id="IPR008991">
    <property type="entry name" value="Translation_prot_SH3-like_sf"/>
</dbReference>
<dbReference type="NCBIfam" id="TIGR01171">
    <property type="entry name" value="rplB_bact"/>
    <property type="match status" value="1"/>
</dbReference>
<dbReference type="PANTHER" id="PTHR13691:SF5">
    <property type="entry name" value="LARGE RIBOSOMAL SUBUNIT PROTEIN UL2M"/>
    <property type="match status" value="1"/>
</dbReference>
<dbReference type="PANTHER" id="PTHR13691">
    <property type="entry name" value="RIBOSOMAL PROTEIN L2"/>
    <property type="match status" value="1"/>
</dbReference>
<dbReference type="Pfam" id="PF00181">
    <property type="entry name" value="Ribosomal_L2"/>
    <property type="match status" value="1"/>
</dbReference>
<dbReference type="Pfam" id="PF03947">
    <property type="entry name" value="Ribosomal_L2_C"/>
    <property type="match status" value="1"/>
</dbReference>
<dbReference type="PIRSF" id="PIRSF002158">
    <property type="entry name" value="Ribosomal_L2"/>
    <property type="match status" value="1"/>
</dbReference>
<dbReference type="SMART" id="SM01383">
    <property type="entry name" value="Ribosomal_L2"/>
    <property type="match status" value="1"/>
</dbReference>
<dbReference type="SMART" id="SM01382">
    <property type="entry name" value="Ribosomal_L2_C"/>
    <property type="match status" value="1"/>
</dbReference>
<dbReference type="SUPFAM" id="SSF50249">
    <property type="entry name" value="Nucleic acid-binding proteins"/>
    <property type="match status" value="1"/>
</dbReference>
<dbReference type="SUPFAM" id="SSF50104">
    <property type="entry name" value="Translation proteins SH3-like domain"/>
    <property type="match status" value="1"/>
</dbReference>
<dbReference type="PROSITE" id="PS00467">
    <property type="entry name" value="RIBOSOMAL_L2"/>
    <property type="match status" value="1"/>
</dbReference>
<accession>B1A976</accession>
<reference key="1">
    <citation type="journal article" date="2008" name="Nature">
        <title>The draft genome of the transgenic tropical fruit tree papaya (Carica papaya Linnaeus).</title>
        <authorList>
            <person name="Ming R."/>
            <person name="Hou S."/>
            <person name="Feng Y."/>
            <person name="Yu Q."/>
            <person name="Dionne-Laporte A."/>
            <person name="Saw J.H."/>
            <person name="Senin P."/>
            <person name="Wang W."/>
            <person name="Ly B.V."/>
            <person name="Lewis K.L."/>
            <person name="Salzberg S.L."/>
            <person name="Feng L."/>
            <person name="Jones M.R."/>
            <person name="Skelton R.L."/>
            <person name="Murray J.E."/>
            <person name="Chen C."/>
            <person name="Qian W."/>
            <person name="Shen J."/>
            <person name="Du P."/>
            <person name="Eustice M."/>
            <person name="Tong E."/>
            <person name="Tang H."/>
            <person name="Lyons E."/>
            <person name="Paull R.E."/>
            <person name="Michael T.P."/>
            <person name="Wall K."/>
            <person name="Rice D.W."/>
            <person name="Albert H."/>
            <person name="Wang M.L."/>
            <person name="Zhu Y.J."/>
            <person name="Schatz M."/>
            <person name="Nagarajan N."/>
            <person name="Acob R.A."/>
            <person name="Guan P."/>
            <person name="Blas A."/>
            <person name="Wai C.M."/>
            <person name="Ackerman C.M."/>
            <person name="Ren Y."/>
            <person name="Liu C."/>
            <person name="Wang J."/>
            <person name="Wang J."/>
            <person name="Na J.K."/>
            <person name="Shakirov E.V."/>
            <person name="Haas B."/>
            <person name="Thimmapuram J."/>
            <person name="Nelson D."/>
            <person name="Wang X."/>
            <person name="Bowers J.E."/>
            <person name="Gschwend A.R."/>
            <person name="Delcher A.L."/>
            <person name="Singh R."/>
            <person name="Suzuki J.Y."/>
            <person name="Tripathi S."/>
            <person name="Neupane K."/>
            <person name="Wei H."/>
            <person name="Irikura B."/>
            <person name="Paidi M."/>
            <person name="Jiang N."/>
            <person name="Zhang W."/>
            <person name="Presting G."/>
            <person name="Windsor A."/>
            <person name="Navajas-Perez R."/>
            <person name="Torres M.J."/>
            <person name="Feltus F.A."/>
            <person name="Porter B."/>
            <person name="Li Y."/>
            <person name="Burroughs A.M."/>
            <person name="Luo M.C."/>
            <person name="Liu L."/>
            <person name="Christopher D.A."/>
            <person name="Mount S.M."/>
            <person name="Moore P.H."/>
            <person name="Sugimura T."/>
            <person name="Jiang J."/>
            <person name="Schuler M.A."/>
            <person name="Friedman V."/>
            <person name="Mitchell-Olds T."/>
            <person name="Shippen D.E."/>
            <person name="dePamphilis C.W."/>
            <person name="Palmer J.D."/>
            <person name="Freeling M."/>
            <person name="Paterson A.H."/>
            <person name="Gonsalves D."/>
            <person name="Wang L."/>
            <person name="Alam M."/>
        </authorList>
    </citation>
    <scope>NUCLEOTIDE SEQUENCE [LARGE SCALE GENOMIC DNA]</scope>
    <source>
        <strain>cv. SunUp</strain>
    </source>
</reference>
<feature type="chain" id="PRO_0000342536" description="Large ribosomal subunit protein uL2cz/uL2cy">
    <location>
        <begin position="1"/>
        <end position="274"/>
    </location>
</feature>
<feature type="region of interest" description="Disordered" evidence="3">
    <location>
        <begin position="224"/>
        <end position="274"/>
    </location>
</feature>
<organism>
    <name type="scientific">Carica papaya</name>
    <name type="common">Papaya</name>
    <dbReference type="NCBI Taxonomy" id="3649"/>
    <lineage>
        <taxon>Eukaryota</taxon>
        <taxon>Viridiplantae</taxon>
        <taxon>Streptophyta</taxon>
        <taxon>Embryophyta</taxon>
        <taxon>Tracheophyta</taxon>
        <taxon>Spermatophyta</taxon>
        <taxon>Magnoliopsida</taxon>
        <taxon>eudicotyledons</taxon>
        <taxon>Gunneridae</taxon>
        <taxon>Pentapetalae</taxon>
        <taxon>rosids</taxon>
        <taxon>malvids</taxon>
        <taxon>Brassicales</taxon>
        <taxon>Caricaceae</taxon>
        <taxon>Carica</taxon>
    </lineage>
</organism>
<keyword id="KW-0150">Chloroplast</keyword>
<keyword id="KW-0934">Plastid</keyword>
<keyword id="KW-0687">Ribonucleoprotein</keyword>
<keyword id="KW-0689">Ribosomal protein</keyword>
<proteinExistence type="inferred from homology"/>
<geneLocation type="chloroplast"/>
<gene>
    <name type="primary">rpl2-A</name>
</gene>
<gene>
    <name type="primary">rpl2-B</name>
</gene>
<name>RK2_CARPA</name>
<evidence type="ECO:0000250" key="1"/>
<evidence type="ECO:0000255" key="2">
    <source>
        <dbReference type="HAMAP-Rule" id="MF_01320"/>
    </source>
</evidence>
<evidence type="ECO:0000256" key="3">
    <source>
        <dbReference type="SAM" id="MobiDB-lite"/>
    </source>
</evidence>
<evidence type="ECO:0000305" key="4"/>
<protein>
    <recommendedName>
        <fullName evidence="2">Large ribosomal subunit protein uL2cz/uL2cy</fullName>
    </recommendedName>
    <alternativeName>
        <fullName evidence="4">50S ribosomal protein L2, chloroplastic</fullName>
    </alternativeName>
</protein>
<sequence length="274" mass="30016">MAIHLYKTSTPSTRNRAVDSQVKSNPRNNLIYGQHRCGKGRNARGIITARHRGGGHKRLYRKIDFRRNEKDIYGRIVTIEYDPNRNAYICLIHYGDGEKRYILHPRGAIIGDTIVSGTEVPIKMGNALPLTDMPLGTAIHNIEITLGKGGQLARAAGAVAKLIAKEGKSATLKLPSGEVRLISKNCSATVGQVGNVGVNQKSLGRAGSKCWLGKRPVVRGVVMNPVDHPHGGGEGRAPIGRKKPATPWGYPALGRRSRKRNKYSDNLILRRRSK</sequence>
<comment type="subunit">
    <text evidence="1">Part of the 50S ribosomal subunit.</text>
</comment>
<comment type="subcellular location">
    <subcellularLocation>
        <location>Plastid</location>
        <location>Chloroplast</location>
    </subcellularLocation>
</comment>
<comment type="similarity">
    <text evidence="4">Belongs to the universal ribosomal protein uL2 family.</text>
</comment>